<protein>
    <recommendedName>
        <fullName evidence="1">Ribonuclease P protein component</fullName>
        <shortName evidence="1">RNase P protein</shortName>
        <shortName evidence="1">RNaseP protein</shortName>
        <ecNumber evidence="1">3.1.26.5</ecNumber>
    </recommendedName>
    <alternativeName>
        <fullName evidence="1">Protein C5</fullName>
    </alternativeName>
</protein>
<keyword id="KW-0255">Endonuclease</keyword>
<keyword id="KW-0378">Hydrolase</keyword>
<keyword id="KW-0540">Nuclease</keyword>
<keyword id="KW-0694">RNA-binding</keyword>
<keyword id="KW-0819">tRNA processing</keyword>
<feature type="chain" id="PRO_1000021392" description="Ribonuclease P protein component">
    <location>
        <begin position="1"/>
        <end position="120"/>
    </location>
</feature>
<evidence type="ECO:0000255" key="1">
    <source>
        <dbReference type="HAMAP-Rule" id="MF_00227"/>
    </source>
</evidence>
<organism>
    <name type="scientific">Chlamydia trachomatis serovar A (strain ATCC VR-571B / DSM 19440 / HAR-13)</name>
    <dbReference type="NCBI Taxonomy" id="315277"/>
    <lineage>
        <taxon>Bacteria</taxon>
        <taxon>Pseudomonadati</taxon>
        <taxon>Chlamydiota</taxon>
        <taxon>Chlamydiia</taxon>
        <taxon>Chlamydiales</taxon>
        <taxon>Chlamydiaceae</taxon>
        <taxon>Chlamydia/Chlamydophila group</taxon>
        <taxon>Chlamydia</taxon>
    </lineage>
</organism>
<sequence>MSRLTLPKNARLLKRKQFVYVQRNGRCCRADQVTLRVVPSRHSNTRKVGITVSKKFGKAHQRNRFKRIVREAFRHVRPNLPGCQAVISPRGNSQPDFLKLSEELLQRIPEALPLASSSRC</sequence>
<comment type="function">
    <text evidence="1">RNaseP catalyzes the removal of the 5'-leader sequence from pre-tRNA to produce the mature 5'-terminus. It can also cleave other RNA substrates such as 4.5S RNA. The protein component plays an auxiliary but essential role in vivo by binding to the 5'-leader sequence and broadening the substrate specificity of the ribozyme.</text>
</comment>
<comment type="catalytic activity">
    <reaction evidence="1">
        <text>Endonucleolytic cleavage of RNA, removing 5'-extranucleotides from tRNA precursor.</text>
        <dbReference type="EC" id="3.1.26.5"/>
    </reaction>
</comment>
<comment type="subunit">
    <text evidence="1">Consists of a catalytic RNA component (M1 or rnpB) and a protein subunit.</text>
</comment>
<comment type="similarity">
    <text evidence="1">Belongs to the RnpA family.</text>
</comment>
<proteinExistence type="inferred from homology"/>
<reference key="1">
    <citation type="journal article" date="2005" name="Infect. Immun.">
        <title>Comparative genomic analysis of Chlamydia trachomatis oculotropic and genitotropic strains.</title>
        <authorList>
            <person name="Carlson J.H."/>
            <person name="Porcella S.F."/>
            <person name="McClarty G."/>
            <person name="Caldwell H.D."/>
        </authorList>
    </citation>
    <scope>NUCLEOTIDE SEQUENCE [LARGE SCALE GENOMIC DNA]</scope>
    <source>
        <strain>ATCC VR-571B / DSM 19440 / HAR-13</strain>
    </source>
</reference>
<gene>
    <name evidence="1" type="primary">rnpA</name>
    <name type="ordered locus">CTA_0854</name>
</gene>
<accession>Q3KKQ8</accession>
<name>RNPA_CHLTA</name>
<dbReference type="EC" id="3.1.26.5" evidence="1"/>
<dbReference type="EMBL" id="CP000051">
    <property type="protein sequence ID" value="AAX51064.1"/>
    <property type="molecule type" value="Genomic_DNA"/>
</dbReference>
<dbReference type="RefSeq" id="WP_011324867.1">
    <property type="nucleotide sequence ID" value="NC_007429.1"/>
</dbReference>
<dbReference type="SMR" id="Q3KKQ8"/>
<dbReference type="KEGG" id="cta:CTA_0854"/>
<dbReference type="HOGENOM" id="CLU_117179_9_2_0"/>
<dbReference type="Proteomes" id="UP000002532">
    <property type="component" value="Chromosome"/>
</dbReference>
<dbReference type="GO" id="GO:0030677">
    <property type="term" value="C:ribonuclease P complex"/>
    <property type="evidence" value="ECO:0007669"/>
    <property type="project" value="TreeGrafter"/>
</dbReference>
<dbReference type="GO" id="GO:0042781">
    <property type="term" value="F:3'-tRNA processing endoribonuclease activity"/>
    <property type="evidence" value="ECO:0007669"/>
    <property type="project" value="TreeGrafter"/>
</dbReference>
<dbReference type="GO" id="GO:0004526">
    <property type="term" value="F:ribonuclease P activity"/>
    <property type="evidence" value="ECO:0007669"/>
    <property type="project" value="UniProtKB-UniRule"/>
</dbReference>
<dbReference type="GO" id="GO:0000049">
    <property type="term" value="F:tRNA binding"/>
    <property type="evidence" value="ECO:0007669"/>
    <property type="project" value="UniProtKB-UniRule"/>
</dbReference>
<dbReference type="GO" id="GO:0001682">
    <property type="term" value="P:tRNA 5'-leader removal"/>
    <property type="evidence" value="ECO:0007669"/>
    <property type="project" value="UniProtKB-UniRule"/>
</dbReference>
<dbReference type="Gene3D" id="3.30.230.10">
    <property type="match status" value="1"/>
</dbReference>
<dbReference type="HAMAP" id="MF_00227">
    <property type="entry name" value="RNase_P"/>
    <property type="match status" value="1"/>
</dbReference>
<dbReference type="InterPro" id="IPR020568">
    <property type="entry name" value="Ribosomal_Su5_D2-typ_SF"/>
</dbReference>
<dbReference type="InterPro" id="IPR014721">
    <property type="entry name" value="Ribsml_uS5_D2-typ_fold_subgr"/>
</dbReference>
<dbReference type="InterPro" id="IPR000100">
    <property type="entry name" value="RNase_P"/>
</dbReference>
<dbReference type="InterPro" id="IPR020539">
    <property type="entry name" value="RNase_P_CS"/>
</dbReference>
<dbReference type="NCBIfam" id="TIGR00188">
    <property type="entry name" value="rnpA"/>
    <property type="match status" value="1"/>
</dbReference>
<dbReference type="PANTHER" id="PTHR33992">
    <property type="entry name" value="RIBONUCLEASE P PROTEIN COMPONENT"/>
    <property type="match status" value="1"/>
</dbReference>
<dbReference type="PANTHER" id="PTHR33992:SF1">
    <property type="entry name" value="RIBONUCLEASE P PROTEIN COMPONENT"/>
    <property type="match status" value="1"/>
</dbReference>
<dbReference type="Pfam" id="PF00825">
    <property type="entry name" value="Ribonuclease_P"/>
    <property type="match status" value="1"/>
</dbReference>
<dbReference type="SUPFAM" id="SSF54211">
    <property type="entry name" value="Ribosomal protein S5 domain 2-like"/>
    <property type="match status" value="1"/>
</dbReference>
<dbReference type="PROSITE" id="PS00648">
    <property type="entry name" value="RIBONUCLEASE_P"/>
    <property type="match status" value="1"/>
</dbReference>